<comment type="function">
    <text evidence="1">Catalyzes a salvage reaction resulting in the formation of AMP, that is energically less costly than de novo synthesis.</text>
</comment>
<comment type="catalytic activity">
    <reaction evidence="1">
        <text>AMP + diphosphate = 5-phospho-alpha-D-ribose 1-diphosphate + adenine</text>
        <dbReference type="Rhea" id="RHEA:16609"/>
        <dbReference type="ChEBI" id="CHEBI:16708"/>
        <dbReference type="ChEBI" id="CHEBI:33019"/>
        <dbReference type="ChEBI" id="CHEBI:58017"/>
        <dbReference type="ChEBI" id="CHEBI:456215"/>
        <dbReference type="EC" id="2.4.2.7"/>
    </reaction>
</comment>
<comment type="pathway">
    <text evidence="1">Purine metabolism; AMP biosynthesis via salvage pathway; AMP from adenine: step 1/1.</text>
</comment>
<comment type="subunit">
    <text evidence="1">Homodimer.</text>
</comment>
<comment type="subcellular location">
    <subcellularLocation>
        <location evidence="1">Cytoplasm</location>
    </subcellularLocation>
</comment>
<comment type="similarity">
    <text evidence="1">Belongs to the purine/pyrimidine phosphoribosyltransferase family.</text>
</comment>
<evidence type="ECO:0000255" key="1">
    <source>
        <dbReference type="HAMAP-Rule" id="MF_00004"/>
    </source>
</evidence>
<feature type="chain" id="PRO_0000321352" description="Adenine phosphoribosyltransferase">
    <location>
        <begin position="1"/>
        <end position="188"/>
    </location>
</feature>
<sequence>MSNALPSAPLDAADYIKSHIRTVPDWPEPGVQFRDITPLLQEPKSLRVLIDLFVQRYIDAKLDYIAGLDARGFIIGPILAYELNLGFIPIRKAGKLPYNRLAQSYELEYGCATVEIHEDACKPGDRVVIIDDLIATGGTMMAGKILLERLGAVVVEGAAIIDLPELGGSKLLRDSGLALYTVTGFEGH</sequence>
<keyword id="KW-0963">Cytoplasm</keyword>
<keyword id="KW-0328">Glycosyltransferase</keyword>
<keyword id="KW-0660">Purine salvage</keyword>
<keyword id="KW-1185">Reference proteome</keyword>
<keyword id="KW-0808">Transferase</keyword>
<protein>
    <recommendedName>
        <fullName evidence="1">Adenine phosphoribosyltransferase</fullName>
        <shortName evidence="1">APRT</shortName>
        <ecNumber evidence="1">2.4.2.7</ecNumber>
    </recommendedName>
</protein>
<reference key="1">
    <citation type="journal article" date="2006" name="Proc. Natl. Acad. Sci. U.S.A.">
        <title>Burkholderia xenovorans LB400 harbors a multi-replicon, 9.73-Mbp genome shaped for versatility.</title>
        <authorList>
            <person name="Chain P.S.G."/>
            <person name="Denef V.J."/>
            <person name="Konstantinidis K.T."/>
            <person name="Vergez L.M."/>
            <person name="Agullo L."/>
            <person name="Reyes V.L."/>
            <person name="Hauser L."/>
            <person name="Cordova M."/>
            <person name="Gomez L."/>
            <person name="Gonzalez M."/>
            <person name="Land M."/>
            <person name="Lao V."/>
            <person name="Larimer F."/>
            <person name="LiPuma J.J."/>
            <person name="Mahenthiralingam E."/>
            <person name="Malfatti S.A."/>
            <person name="Marx C.J."/>
            <person name="Parnell J.J."/>
            <person name="Ramette A."/>
            <person name="Richardson P."/>
            <person name="Seeger M."/>
            <person name="Smith D."/>
            <person name="Spilker T."/>
            <person name="Sul W.J."/>
            <person name="Tsoi T.V."/>
            <person name="Ulrich L.E."/>
            <person name="Zhulin I.B."/>
            <person name="Tiedje J.M."/>
        </authorList>
    </citation>
    <scope>NUCLEOTIDE SEQUENCE [LARGE SCALE GENOMIC DNA]</scope>
    <source>
        <strain>LB400</strain>
    </source>
</reference>
<name>APT_PARXL</name>
<dbReference type="EC" id="2.4.2.7" evidence="1"/>
<dbReference type="EMBL" id="CP000270">
    <property type="protein sequence ID" value="ABE28885.1"/>
    <property type="molecule type" value="Genomic_DNA"/>
</dbReference>
<dbReference type="RefSeq" id="WP_011486714.1">
    <property type="nucleotide sequence ID" value="NC_007951.1"/>
</dbReference>
<dbReference type="SMR" id="Q145V4"/>
<dbReference type="STRING" id="266265.Bxe_A4115"/>
<dbReference type="KEGG" id="bxb:DR64_1791"/>
<dbReference type="KEGG" id="bxe:Bxe_A4115"/>
<dbReference type="PATRIC" id="fig|266265.5.peg.367"/>
<dbReference type="eggNOG" id="COG0503">
    <property type="taxonomic scope" value="Bacteria"/>
</dbReference>
<dbReference type="OrthoDB" id="9803963at2"/>
<dbReference type="UniPathway" id="UPA00588">
    <property type="reaction ID" value="UER00646"/>
</dbReference>
<dbReference type="Proteomes" id="UP000001817">
    <property type="component" value="Chromosome 1"/>
</dbReference>
<dbReference type="GO" id="GO:0005737">
    <property type="term" value="C:cytoplasm"/>
    <property type="evidence" value="ECO:0007669"/>
    <property type="project" value="UniProtKB-SubCell"/>
</dbReference>
<dbReference type="GO" id="GO:0002055">
    <property type="term" value="F:adenine binding"/>
    <property type="evidence" value="ECO:0007669"/>
    <property type="project" value="TreeGrafter"/>
</dbReference>
<dbReference type="GO" id="GO:0003999">
    <property type="term" value="F:adenine phosphoribosyltransferase activity"/>
    <property type="evidence" value="ECO:0007669"/>
    <property type="project" value="UniProtKB-UniRule"/>
</dbReference>
<dbReference type="GO" id="GO:0016208">
    <property type="term" value="F:AMP binding"/>
    <property type="evidence" value="ECO:0007669"/>
    <property type="project" value="TreeGrafter"/>
</dbReference>
<dbReference type="GO" id="GO:0006168">
    <property type="term" value="P:adenine salvage"/>
    <property type="evidence" value="ECO:0007669"/>
    <property type="project" value="InterPro"/>
</dbReference>
<dbReference type="GO" id="GO:0044209">
    <property type="term" value="P:AMP salvage"/>
    <property type="evidence" value="ECO:0007669"/>
    <property type="project" value="UniProtKB-UniRule"/>
</dbReference>
<dbReference type="GO" id="GO:0006166">
    <property type="term" value="P:purine ribonucleoside salvage"/>
    <property type="evidence" value="ECO:0007669"/>
    <property type="project" value="UniProtKB-KW"/>
</dbReference>
<dbReference type="CDD" id="cd06223">
    <property type="entry name" value="PRTases_typeI"/>
    <property type="match status" value="1"/>
</dbReference>
<dbReference type="FunFam" id="3.40.50.2020:FF:000021">
    <property type="entry name" value="Adenine phosphoribosyltransferase"/>
    <property type="match status" value="1"/>
</dbReference>
<dbReference type="Gene3D" id="3.40.50.2020">
    <property type="match status" value="1"/>
</dbReference>
<dbReference type="HAMAP" id="MF_00004">
    <property type="entry name" value="Aden_phosphoribosyltr"/>
    <property type="match status" value="1"/>
</dbReference>
<dbReference type="InterPro" id="IPR005764">
    <property type="entry name" value="Ade_phspho_trans"/>
</dbReference>
<dbReference type="InterPro" id="IPR000836">
    <property type="entry name" value="PRibTrfase_dom"/>
</dbReference>
<dbReference type="InterPro" id="IPR029057">
    <property type="entry name" value="PRTase-like"/>
</dbReference>
<dbReference type="InterPro" id="IPR050054">
    <property type="entry name" value="UPRTase/APRTase"/>
</dbReference>
<dbReference type="NCBIfam" id="TIGR01090">
    <property type="entry name" value="apt"/>
    <property type="match status" value="1"/>
</dbReference>
<dbReference type="NCBIfam" id="NF002634">
    <property type="entry name" value="PRK02304.1-3"/>
    <property type="match status" value="1"/>
</dbReference>
<dbReference type="NCBIfam" id="NF002636">
    <property type="entry name" value="PRK02304.1-5"/>
    <property type="match status" value="1"/>
</dbReference>
<dbReference type="PANTHER" id="PTHR32315">
    <property type="entry name" value="ADENINE PHOSPHORIBOSYLTRANSFERASE"/>
    <property type="match status" value="1"/>
</dbReference>
<dbReference type="PANTHER" id="PTHR32315:SF3">
    <property type="entry name" value="ADENINE PHOSPHORIBOSYLTRANSFERASE"/>
    <property type="match status" value="1"/>
</dbReference>
<dbReference type="Pfam" id="PF00156">
    <property type="entry name" value="Pribosyltran"/>
    <property type="match status" value="1"/>
</dbReference>
<dbReference type="SUPFAM" id="SSF53271">
    <property type="entry name" value="PRTase-like"/>
    <property type="match status" value="1"/>
</dbReference>
<dbReference type="PROSITE" id="PS00103">
    <property type="entry name" value="PUR_PYR_PR_TRANSFER"/>
    <property type="match status" value="1"/>
</dbReference>
<proteinExistence type="inferred from homology"/>
<accession>Q145V4</accession>
<organism>
    <name type="scientific">Paraburkholderia xenovorans (strain LB400)</name>
    <dbReference type="NCBI Taxonomy" id="266265"/>
    <lineage>
        <taxon>Bacteria</taxon>
        <taxon>Pseudomonadati</taxon>
        <taxon>Pseudomonadota</taxon>
        <taxon>Betaproteobacteria</taxon>
        <taxon>Burkholderiales</taxon>
        <taxon>Burkholderiaceae</taxon>
        <taxon>Paraburkholderia</taxon>
    </lineage>
</organism>
<gene>
    <name evidence="1" type="primary">apt</name>
    <name type="ordered locus">Bxeno_A0347</name>
    <name type="ORF">Bxe_A4115</name>
</gene>